<evidence type="ECO:0000250" key="1"/>
<evidence type="ECO:0000255" key="2">
    <source>
        <dbReference type="HAMAP-Rule" id="MF_00138"/>
    </source>
</evidence>
<evidence type="ECO:0000305" key="3"/>
<feature type="chain" id="PRO_0000151455" description="Phosphoribosylamine--glycine ligase">
    <location>
        <begin position="1"/>
        <end position="412"/>
    </location>
</feature>
<feature type="domain" description="ATP-grasp" evidence="2">
    <location>
        <begin position="108"/>
        <end position="309"/>
    </location>
</feature>
<feature type="binding site" evidence="2">
    <location>
        <begin position="134"/>
        <end position="190"/>
    </location>
    <ligand>
        <name>ATP</name>
        <dbReference type="ChEBI" id="CHEBI:30616"/>
    </ligand>
</feature>
<feature type="binding site" evidence="2">
    <location>
        <position position="279"/>
    </location>
    <ligand>
        <name>Mg(2+)</name>
        <dbReference type="ChEBI" id="CHEBI:18420"/>
    </ligand>
</feature>
<feature type="binding site" evidence="2">
    <location>
        <position position="281"/>
    </location>
    <ligand>
        <name>Mg(2+)</name>
        <dbReference type="ChEBI" id="CHEBI:18420"/>
    </ligand>
</feature>
<feature type="sequence conflict" description="In Ref. 1; CAA04374." evidence="3" ref="1">
    <original>D</original>
    <variation>H</variation>
    <location>
        <position position="46"/>
    </location>
</feature>
<feature type="sequence conflict" description="In Ref. 1; CAA04374." evidence="3" ref="1">
    <original>G</original>
    <variation>E</variation>
    <location>
        <position position="215"/>
    </location>
</feature>
<proteinExistence type="inferred from homology"/>
<protein>
    <recommendedName>
        <fullName evidence="2">Phosphoribosylamine--glycine ligase</fullName>
        <ecNumber evidence="2">6.3.4.13</ecNumber>
    </recommendedName>
    <alternativeName>
        <fullName evidence="2">GARS</fullName>
    </alternativeName>
    <alternativeName>
        <fullName evidence="2">Glycinamide ribonucleotide synthetase</fullName>
    </alternativeName>
    <alternativeName>
        <fullName evidence="2">Phosphoribosylglycinamide synthetase</fullName>
    </alternativeName>
</protein>
<comment type="catalytic activity">
    <reaction evidence="2">
        <text>5-phospho-beta-D-ribosylamine + glycine + ATP = N(1)-(5-phospho-beta-D-ribosyl)glycinamide + ADP + phosphate + H(+)</text>
        <dbReference type="Rhea" id="RHEA:17453"/>
        <dbReference type="ChEBI" id="CHEBI:15378"/>
        <dbReference type="ChEBI" id="CHEBI:30616"/>
        <dbReference type="ChEBI" id="CHEBI:43474"/>
        <dbReference type="ChEBI" id="CHEBI:57305"/>
        <dbReference type="ChEBI" id="CHEBI:58681"/>
        <dbReference type="ChEBI" id="CHEBI:143788"/>
        <dbReference type="ChEBI" id="CHEBI:456216"/>
        <dbReference type="EC" id="6.3.4.13"/>
    </reaction>
</comment>
<comment type="cofactor">
    <cofactor evidence="1">
        <name>Mg(2+)</name>
        <dbReference type="ChEBI" id="CHEBI:18420"/>
    </cofactor>
    <cofactor evidence="1">
        <name>Mn(2+)</name>
        <dbReference type="ChEBI" id="CHEBI:29035"/>
    </cofactor>
    <text evidence="1">Binds 1 Mg(2+) or Mn(2+) ion per subunit.</text>
</comment>
<comment type="pathway">
    <text evidence="2">Purine metabolism; IMP biosynthesis via de novo pathway; N(1)-(5-phospho-D-ribosyl)glycinamide from 5-phospho-alpha-D-ribose 1-diphosphate: step 2/2.</text>
</comment>
<comment type="similarity">
    <text evidence="2">Belongs to the GARS family.</text>
</comment>
<comment type="sequence caution" evidence="3">
    <conflict type="erroneous initiation">
        <sequence resource="EMBL-CDS" id="AAK05611"/>
    </conflict>
</comment>
<gene>
    <name evidence="2" type="primary">purD</name>
    <name type="ordered locus">LL1513</name>
    <name type="ORF">L153005</name>
</gene>
<dbReference type="EC" id="6.3.4.13" evidence="2"/>
<dbReference type="EMBL" id="AJ000883">
    <property type="protein sequence ID" value="CAA04374.1"/>
    <property type="molecule type" value="Genomic_DNA"/>
</dbReference>
<dbReference type="EMBL" id="AE005176">
    <property type="protein sequence ID" value="AAK05611.1"/>
    <property type="status" value="ALT_INIT"/>
    <property type="molecule type" value="Genomic_DNA"/>
</dbReference>
<dbReference type="PIR" id="A86814">
    <property type="entry name" value="A86814"/>
</dbReference>
<dbReference type="RefSeq" id="NP_267669.1">
    <property type="nucleotide sequence ID" value="NC_002662.1"/>
</dbReference>
<dbReference type="RefSeq" id="WP_014570649.1">
    <property type="nucleotide sequence ID" value="NC_002662.1"/>
</dbReference>
<dbReference type="SMR" id="Q9ZF44"/>
<dbReference type="PaxDb" id="272623-L153005"/>
<dbReference type="EnsemblBacteria" id="AAK05611">
    <property type="protein sequence ID" value="AAK05611"/>
    <property type="gene ID" value="L153005"/>
</dbReference>
<dbReference type="KEGG" id="lla:L153005"/>
<dbReference type="PATRIC" id="fig|272623.7.peg.1623"/>
<dbReference type="eggNOG" id="COG0151">
    <property type="taxonomic scope" value="Bacteria"/>
</dbReference>
<dbReference type="HOGENOM" id="CLU_027420_3_1_9"/>
<dbReference type="OrthoDB" id="9807240at2"/>
<dbReference type="UniPathway" id="UPA00074">
    <property type="reaction ID" value="UER00125"/>
</dbReference>
<dbReference type="Proteomes" id="UP000002196">
    <property type="component" value="Chromosome"/>
</dbReference>
<dbReference type="GO" id="GO:0005524">
    <property type="term" value="F:ATP binding"/>
    <property type="evidence" value="ECO:0007669"/>
    <property type="project" value="UniProtKB-KW"/>
</dbReference>
<dbReference type="GO" id="GO:0046872">
    <property type="term" value="F:metal ion binding"/>
    <property type="evidence" value="ECO:0007669"/>
    <property type="project" value="UniProtKB-KW"/>
</dbReference>
<dbReference type="GO" id="GO:0004637">
    <property type="term" value="F:phosphoribosylamine-glycine ligase activity"/>
    <property type="evidence" value="ECO:0007669"/>
    <property type="project" value="UniProtKB-UniRule"/>
</dbReference>
<dbReference type="GO" id="GO:0006189">
    <property type="term" value="P:'de novo' IMP biosynthetic process"/>
    <property type="evidence" value="ECO:0007669"/>
    <property type="project" value="UniProtKB-UniRule"/>
</dbReference>
<dbReference type="GO" id="GO:0009113">
    <property type="term" value="P:purine nucleobase biosynthetic process"/>
    <property type="evidence" value="ECO:0007669"/>
    <property type="project" value="InterPro"/>
</dbReference>
<dbReference type="FunFam" id="3.40.50.20:FF:000006">
    <property type="entry name" value="Phosphoribosylamine--glycine ligase, chloroplastic"/>
    <property type="match status" value="1"/>
</dbReference>
<dbReference type="Gene3D" id="3.40.50.20">
    <property type="match status" value="1"/>
</dbReference>
<dbReference type="Gene3D" id="3.30.1490.20">
    <property type="entry name" value="ATP-grasp fold, A domain"/>
    <property type="match status" value="1"/>
</dbReference>
<dbReference type="Gene3D" id="3.30.470.20">
    <property type="entry name" value="ATP-grasp fold, B domain"/>
    <property type="match status" value="1"/>
</dbReference>
<dbReference type="Gene3D" id="3.90.600.10">
    <property type="entry name" value="Phosphoribosylglycinamide synthetase, C-terminal domain"/>
    <property type="match status" value="1"/>
</dbReference>
<dbReference type="HAMAP" id="MF_00138">
    <property type="entry name" value="GARS"/>
    <property type="match status" value="1"/>
</dbReference>
<dbReference type="InterPro" id="IPR011761">
    <property type="entry name" value="ATP-grasp"/>
</dbReference>
<dbReference type="InterPro" id="IPR013815">
    <property type="entry name" value="ATP_grasp_subdomain_1"/>
</dbReference>
<dbReference type="InterPro" id="IPR016185">
    <property type="entry name" value="PreATP-grasp_dom_sf"/>
</dbReference>
<dbReference type="InterPro" id="IPR020561">
    <property type="entry name" value="PRibGlycinamid_synth_ATP-grasp"/>
</dbReference>
<dbReference type="InterPro" id="IPR000115">
    <property type="entry name" value="PRibGlycinamide_synth"/>
</dbReference>
<dbReference type="InterPro" id="IPR020560">
    <property type="entry name" value="PRibGlycinamide_synth_C-dom"/>
</dbReference>
<dbReference type="InterPro" id="IPR037123">
    <property type="entry name" value="PRibGlycinamide_synth_C_sf"/>
</dbReference>
<dbReference type="InterPro" id="IPR020559">
    <property type="entry name" value="PRibGlycinamide_synth_CS"/>
</dbReference>
<dbReference type="InterPro" id="IPR020562">
    <property type="entry name" value="PRibGlycinamide_synth_N"/>
</dbReference>
<dbReference type="InterPro" id="IPR011054">
    <property type="entry name" value="Rudment_hybrid_motif"/>
</dbReference>
<dbReference type="NCBIfam" id="TIGR00877">
    <property type="entry name" value="purD"/>
    <property type="match status" value="1"/>
</dbReference>
<dbReference type="PANTHER" id="PTHR43472">
    <property type="entry name" value="PHOSPHORIBOSYLAMINE--GLYCINE LIGASE"/>
    <property type="match status" value="1"/>
</dbReference>
<dbReference type="PANTHER" id="PTHR43472:SF1">
    <property type="entry name" value="PHOSPHORIBOSYLAMINE--GLYCINE LIGASE, CHLOROPLASTIC"/>
    <property type="match status" value="1"/>
</dbReference>
<dbReference type="Pfam" id="PF01071">
    <property type="entry name" value="GARS_A"/>
    <property type="match status" value="1"/>
</dbReference>
<dbReference type="Pfam" id="PF02843">
    <property type="entry name" value="GARS_C"/>
    <property type="match status" value="1"/>
</dbReference>
<dbReference type="Pfam" id="PF02844">
    <property type="entry name" value="GARS_N"/>
    <property type="match status" value="1"/>
</dbReference>
<dbReference type="SMART" id="SM01209">
    <property type="entry name" value="GARS_A"/>
    <property type="match status" value="1"/>
</dbReference>
<dbReference type="SMART" id="SM01210">
    <property type="entry name" value="GARS_C"/>
    <property type="match status" value="1"/>
</dbReference>
<dbReference type="SUPFAM" id="SSF56059">
    <property type="entry name" value="Glutathione synthetase ATP-binding domain-like"/>
    <property type="match status" value="1"/>
</dbReference>
<dbReference type="SUPFAM" id="SSF52440">
    <property type="entry name" value="PreATP-grasp domain"/>
    <property type="match status" value="1"/>
</dbReference>
<dbReference type="SUPFAM" id="SSF51246">
    <property type="entry name" value="Rudiment single hybrid motif"/>
    <property type="match status" value="1"/>
</dbReference>
<dbReference type="PROSITE" id="PS50975">
    <property type="entry name" value="ATP_GRASP"/>
    <property type="match status" value="1"/>
</dbReference>
<dbReference type="PROSITE" id="PS00184">
    <property type="entry name" value="GARS"/>
    <property type="match status" value="1"/>
</dbReference>
<keyword id="KW-0067">ATP-binding</keyword>
<keyword id="KW-0436">Ligase</keyword>
<keyword id="KW-0460">Magnesium</keyword>
<keyword id="KW-0464">Manganese</keyword>
<keyword id="KW-0479">Metal-binding</keyword>
<keyword id="KW-0547">Nucleotide-binding</keyword>
<keyword id="KW-0658">Purine biosynthesis</keyword>
<keyword id="KW-1185">Reference proteome</keyword>
<accession>Q9ZF44</accession>
<organism>
    <name type="scientific">Lactococcus lactis subsp. lactis (strain IL1403)</name>
    <name type="common">Streptococcus lactis</name>
    <dbReference type="NCBI Taxonomy" id="272623"/>
    <lineage>
        <taxon>Bacteria</taxon>
        <taxon>Bacillati</taxon>
        <taxon>Bacillota</taxon>
        <taxon>Bacilli</taxon>
        <taxon>Lactobacillales</taxon>
        <taxon>Streptococcaceae</taxon>
        <taxon>Lactococcus</taxon>
    </lineage>
</organism>
<reference key="1">
    <citation type="journal article" date="1998" name="Appl. Environ. Microbiol.">
        <title>Cloning and expression of the Lactococcus lactis purDEK genes, required for growth in milk.</title>
        <authorList>
            <person name="Nilsson D."/>
            <person name="Kilstrup M."/>
        </authorList>
    </citation>
    <scope>NUCLEOTIDE SEQUENCE [GENOMIC DNA]</scope>
    <source>
        <strain>CHCC373</strain>
    </source>
</reference>
<reference key="2">
    <citation type="journal article" date="2001" name="Genome Res.">
        <title>The complete genome sequence of the lactic acid bacterium Lactococcus lactis ssp. lactis IL1403.</title>
        <authorList>
            <person name="Bolotin A."/>
            <person name="Wincker P."/>
            <person name="Mauger S."/>
            <person name="Jaillon O."/>
            <person name="Malarme K."/>
            <person name="Weissenbach J."/>
            <person name="Ehrlich S.D."/>
            <person name="Sorokin A."/>
        </authorList>
    </citation>
    <scope>NUCLEOTIDE SEQUENCE [LARGE SCALE GENOMIC DNA]</scope>
    <source>
        <strain>IL1403</strain>
    </source>
</reference>
<sequence>MKILVIGSGGREHALAKKFMESPQVEEVFVAPGNSGMEKDGIQIVDISELSNDKLVKFAQNQNIGLTFVGPETALMNGVVDAFIKAELPIFGPNKMAAELEGSKDFAKSIMKKYGVPTADYATFDSLEPALAYLDEKGVPLVIKADGLAAGKGVTVAFDIETAKSALADIFSGSQGKVVIEEFLDGEEFSLFSFIHDGKIYPMPIAQDHKRAFDGDKGPNTGGMGAYSPVLHISKEVVNEALEKVVKPTVAGMIEEGKSFTGVLYAGLILTEDGVKTIEFNARFGDPETQVVLPRLKSDLAQAIIDILAGNEPTLEWLESGVTLGVVVAAEGYPSQAKLGLILPEIPEGLNVYYAGVSKNENNQLISSGGRVYLVSETGEDVKSTQKLLYEKLDKLENDGFFYRHDIGSRAI</sequence>
<name>PUR2_LACLA</name>